<gene>
    <name evidence="1" type="primary">folD</name>
    <name type="ordered locus">NT01EI_3003</name>
</gene>
<keyword id="KW-0028">Amino-acid biosynthesis</keyword>
<keyword id="KW-0368">Histidine biosynthesis</keyword>
<keyword id="KW-0378">Hydrolase</keyword>
<keyword id="KW-0486">Methionine biosynthesis</keyword>
<keyword id="KW-0511">Multifunctional enzyme</keyword>
<keyword id="KW-0521">NADP</keyword>
<keyword id="KW-0554">One-carbon metabolism</keyword>
<keyword id="KW-0560">Oxidoreductase</keyword>
<keyword id="KW-0658">Purine biosynthesis</keyword>
<accession>C5B8V3</accession>
<feature type="chain" id="PRO_1000215596" description="Bifunctional protein FolD">
    <location>
        <begin position="1"/>
        <end position="285"/>
    </location>
</feature>
<feature type="binding site" evidence="1">
    <location>
        <begin position="166"/>
        <end position="168"/>
    </location>
    <ligand>
        <name>NADP(+)</name>
        <dbReference type="ChEBI" id="CHEBI:58349"/>
    </ligand>
</feature>
<feature type="binding site" evidence="1">
    <location>
        <position position="191"/>
    </location>
    <ligand>
        <name>NADP(+)</name>
        <dbReference type="ChEBI" id="CHEBI:58349"/>
    </ligand>
</feature>
<feature type="binding site" evidence="1">
    <location>
        <position position="232"/>
    </location>
    <ligand>
        <name>NADP(+)</name>
        <dbReference type="ChEBI" id="CHEBI:58349"/>
    </ligand>
</feature>
<dbReference type="EC" id="1.5.1.5" evidence="1"/>
<dbReference type="EC" id="3.5.4.9" evidence="1"/>
<dbReference type="EMBL" id="CP001600">
    <property type="protein sequence ID" value="ACR70156.1"/>
    <property type="molecule type" value="Genomic_DNA"/>
</dbReference>
<dbReference type="RefSeq" id="WP_015872249.1">
    <property type="nucleotide sequence ID" value="NZ_CP169062.1"/>
</dbReference>
<dbReference type="SMR" id="C5B8V3"/>
<dbReference type="STRING" id="67780.B6E78_06895"/>
<dbReference type="GeneID" id="69539880"/>
<dbReference type="KEGG" id="eic:NT01EI_3003"/>
<dbReference type="PATRIC" id="fig|634503.3.peg.2684"/>
<dbReference type="HOGENOM" id="CLU_034045_2_1_6"/>
<dbReference type="OrthoDB" id="9803580at2"/>
<dbReference type="UniPathway" id="UPA00193"/>
<dbReference type="Proteomes" id="UP000001485">
    <property type="component" value="Chromosome"/>
</dbReference>
<dbReference type="GO" id="GO:0005829">
    <property type="term" value="C:cytosol"/>
    <property type="evidence" value="ECO:0007669"/>
    <property type="project" value="TreeGrafter"/>
</dbReference>
<dbReference type="GO" id="GO:0004477">
    <property type="term" value="F:methenyltetrahydrofolate cyclohydrolase activity"/>
    <property type="evidence" value="ECO:0007669"/>
    <property type="project" value="UniProtKB-UniRule"/>
</dbReference>
<dbReference type="GO" id="GO:0004488">
    <property type="term" value="F:methylenetetrahydrofolate dehydrogenase (NADP+) activity"/>
    <property type="evidence" value="ECO:0007669"/>
    <property type="project" value="UniProtKB-UniRule"/>
</dbReference>
<dbReference type="GO" id="GO:0000105">
    <property type="term" value="P:L-histidine biosynthetic process"/>
    <property type="evidence" value="ECO:0007669"/>
    <property type="project" value="UniProtKB-KW"/>
</dbReference>
<dbReference type="GO" id="GO:0009086">
    <property type="term" value="P:methionine biosynthetic process"/>
    <property type="evidence" value="ECO:0007669"/>
    <property type="project" value="UniProtKB-KW"/>
</dbReference>
<dbReference type="GO" id="GO:0006164">
    <property type="term" value="P:purine nucleotide biosynthetic process"/>
    <property type="evidence" value="ECO:0007669"/>
    <property type="project" value="UniProtKB-KW"/>
</dbReference>
<dbReference type="GO" id="GO:0035999">
    <property type="term" value="P:tetrahydrofolate interconversion"/>
    <property type="evidence" value="ECO:0007669"/>
    <property type="project" value="UniProtKB-UniRule"/>
</dbReference>
<dbReference type="CDD" id="cd01080">
    <property type="entry name" value="NAD_bind_m-THF_DH_Cyclohyd"/>
    <property type="match status" value="1"/>
</dbReference>
<dbReference type="FunFam" id="3.40.50.10860:FF:000001">
    <property type="entry name" value="Bifunctional protein FolD"/>
    <property type="match status" value="1"/>
</dbReference>
<dbReference type="FunFam" id="3.40.50.720:FF:000006">
    <property type="entry name" value="Bifunctional protein FolD"/>
    <property type="match status" value="1"/>
</dbReference>
<dbReference type="Gene3D" id="3.40.50.10860">
    <property type="entry name" value="Leucine Dehydrogenase, chain A, domain 1"/>
    <property type="match status" value="1"/>
</dbReference>
<dbReference type="Gene3D" id="3.40.50.720">
    <property type="entry name" value="NAD(P)-binding Rossmann-like Domain"/>
    <property type="match status" value="1"/>
</dbReference>
<dbReference type="HAMAP" id="MF_01576">
    <property type="entry name" value="THF_DHG_CYH"/>
    <property type="match status" value="1"/>
</dbReference>
<dbReference type="InterPro" id="IPR046346">
    <property type="entry name" value="Aminoacid_DH-like_N_sf"/>
</dbReference>
<dbReference type="InterPro" id="IPR036291">
    <property type="entry name" value="NAD(P)-bd_dom_sf"/>
</dbReference>
<dbReference type="InterPro" id="IPR000672">
    <property type="entry name" value="THF_DH/CycHdrlase"/>
</dbReference>
<dbReference type="InterPro" id="IPR020630">
    <property type="entry name" value="THF_DH/CycHdrlase_cat_dom"/>
</dbReference>
<dbReference type="InterPro" id="IPR020867">
    <property type="entry name" value="THF_DH/CycHdrlase_CS"/>
</dbReference>
<dbReference type="InterPro" id="IPR020631">
    <property type="entry name" value="THF_DH/CycHdrlase_NAD-bd_dom"/>
</dbReference>
<dbReference type="NCBIfam" id="NF008058">
    <property type="entry name" value="PRK10792.1"/>
    <property type="match status" value="1"/>
</dbReference>
<dbReference type="NCBIfam" id="NF010783">
    <property type="entry name" value="PRK14186.1"/>
    <property type="match status" value="1"/>
</dbReference>
<dbReference type="PANTHER" id="PTHR48099:SF5">
    <property type="entry name" value="C-1-TETRAHYDROFOLATE SYNTHASE, CYTOPLASMIC"/>
    <property type="match status" value="1"/>
</dbReference>
<dbReference type="PANTHER" id="PTHR48099">
    <property type="entry name" value="C-1-TETRAHYDROFOLATE SYNTHASE, CYTOPLASMIC-RELATED"/>
    <property type="match status" value="1"/>
</dbReference>
<dbReference type="Pfam" id="PF00763">
    <property type="entry name" value="THF_DHG_CYH"/>
    <property type="match status" value="1"/>
</dbReference>
<dbReference type="Pfam" id="PF02882">
    <property type="entry name" value="THF_DHG_CYH_C"/>
    <property type="match status" value="1"/>
</dbReference>
<dbReference type="PRINTS" id="PR00085">
    <property type="entry name" value="THFDHDRGNASE"/>
</dbReference>
<dbReference type="SUPFAM" id="SSF53223">
    <property type="entry name" value="Aminoacid dehydrogenase-like, N-terminal domain"/>
    <property type="match status" value="1"/>
</dbReference>
<dbReference type="SUPFAM" id="SSF51735">
    <property type="entry name" value="NAD(P)-binding Rossmann-fold domains"/>
    <property type="match status" value="1"/>
</dbReference>
<dbReference type="PROSITE" id="PS00766">
    <property type="entry name" value="THF_DHG_CYH_1"/>
    <property type="match status" value="1"/>
</dbReference>
<dbReference type="PROSITE" id="PS00767">
    <property type="entry name" value="THF_DHG_CYH_2"/>
    <property type="match status" value="1"/>
</dbReference>
<comment type="function">
    <text evidence="1">Catalyzes the oxidation of 5,10-methylenetetrahydrofolate to 5,10-methenyltetrahydrofolate and then the hydrolysis of 5,10-methenyltetrahydrofolate to 10-formyltetrahydrofolate.</text>
</comment>
<comment type="catalytic activity">
    <reaction evidence="1">
        <text>(6R)-5,10-methylene-5,6,7,8-tetrahydrofolate + NADP(+) = (6R)-5,10-methenyltetrahydrofolate + NADPH</text>
        <dbReference type="Rhea" id="RHEA:22812"/>
        <dbReference type="ChEBI" id="CHEBI:15636"/>
        <dbReference type="ChEBI" id="CHEBI:57455"/>
        <dbReference type="ChEBI" id="CHEBI:57783"/>
        <dbReference type="ChEBI" id="CHEBI:58349"/>
        <dbReference type="EC" id="1.5.1.5"/>
    </reaction>
</comment>
<comment type="catalytic activity">
    <reaction evidence="1">
        <text>(6R)-5,10-methenyltetrahydrofolate + H2O = (6R)-10-formyltetrahydrofolate + H(+)</text>
        <dbReference type="Rhea" id="RHEA:23700"/>
        <dbReference type="ChEBI" id="CHEBI:15377"/>
        <dbReference type="ChEBI" id="CHEBI:15378"/>
        <dbReference type="ChEBI" id="CHEBI:57455"/>
        <dbReference type="ChEBI" id="CHEBI:195366"/>
        <dbReference type="EC" id="3.5.4.9"/>
    </reaction>
</comment>
<comment type="pathway">
    <text evidence="1">One-carbon metabolism; tetrahydrofolate interconversion.</text>
</comment>
<comment type="subunit">
    <text evidence="1">Homodimer.</text>
</comment>
<comment type="similarity">
    <text evidence="1">Belongs to the tetrahydrofolate dehydrogenase/cyclohydrolase family.</text>
</comment>
<proteinExistence type="inferred from homology"/>
<name>FOLD_EDWI9</name>
<reference key="1">
    <citation type="submission" date="2009-03" db="EMBL/GenBank/DDBJ databases">
        <title>Complete genome sequence of Edwardsiella ictaluri 93-146.</title>
        <authorList>
            <person name="Williams M.L."/>
            <person name="Gillaspy A.F."/>
            <person name="Dyer D.W."/>
            <person name="Thune R.L."/>
            <person name="Waldbieser G.C."/>
            <person name="Schuster S.C."/>
            <person name="Gipson J."/>
            <person name="Zaitshik J."/>
            <person name="Landry C."/>
            <person name="Lawrence M.L."/>
        </authorList>
    </citation>
    <scope>NUCLEOTIDE SEQUENCE [LARGE SCALE GENOMIC DNA]</scope>
    <source>
        <strain>93-146</strain>
    </source>
</reference>
<evidence type="ECO:0000255" key="1">
    <source>
        <dbReference type="HAMAP-Rule" id="MF_01576"/>
    </source>
</evidence>
<sequence length="285" mass="30470">MAAKIIDGKTIARQVRSEVAARVRQRLADGKRAPGLAVIMVGDDPASRIYVGSKQRACEEVGFLSRSYALPDSTDEAQLLALIDTLNADAAIDGILVQLPLPAGIDNSRVLERIHPDKDVDGFHPYNLGRLCQRTPKLRPCTPRGIITLLERCGIETQGMDAVMVGASNIVGRPMALELLLAGCTTTITHSRTRNLQQHVERADLIVAAVGKPGFIPGEWVKPGAVVIDVGINRLESGKVVGDVDFTGAAQRASWITPVPGGVGPMTVATLMQNTLQACEAFHDD</sequence>
<protein>
    <recommendedName>
        <fullName evidence="1">Bifunctional protein FolD</fullName>
    </recommendedName>
    <domain>
        <recommendedName>
            <fullName evidence="1">Methylenetetrahydrofolate dehydrogenase</fullName>
            <ecNumber evidence="1">1.5.1.5</ecNumber>
        </recommendedName>
    </domain>
    <domain>
        <recommendedName>
            <fullName evidence="1">Methenyltetrahydrofolate cyclohydrolase</fullName>
            <ecNumber evidence="1">3.5.4.9</ecNumber>
        </recommendedName>
    </domain>
</protein>
<organism>
    <name type="scientific">Edwardsiella ictaluri (strain 93-146)</name>
    <dbReference type="NCBI Taxonomy" id="634503"/>
    <lineage>
        <taxon>Bacteria</taxon>
        <taxon>Pseudomonadati</taxon>
        <taxon>Pseudomonadota</taxon>
        <taxon>Gammaproteobacteria</taxon>
        <taxon>Enterobacterales</taxon>
        <taxon>Hafniaceae</taxon>
        <taxon>Edwardsiella</taxon>
    </lineage>
</organism>